<keyword id="KW-0067">ATP-binding</keyword>
<keyword id="KW-0963">Cytoplasm</keyword>
<keyword id="KW-0418">Kinase</keyword>
<keyword id="KW-0479">Metal-binding</keyword>
<keyword id="KW-0545">Nucleotide biosynthesis</keyword>
<keyword id="KW-0547">Nucleotide-binding</keyword>
<keyword id="KW-1185">Reference proteome</keyword>
<keyword id="KW-0808">Transferase</keyword>
<keyword id="KW-0862">Zinc</keyword>
<organism>
    <name type="scientific">Lactobacillus acidophilus (strain ATCC 700396 / NCK56 / N2 / NCFM)</name>
    <dbReference type="NCBI Taxonomy" id="272621"/>
    <lineage>
        <taxon>Bacteria</taxon>
        <taxon>Bacillati</taxon>
        <taxon>Bacillota</taxon>
        <taxon>Bacilli</taxon>
        <taxon>Lactobacillales</taxon>
        <taxon>Lactobacillaceae</taxon>
        <taxon>Lactobacillus</taxon>
    </lineage>
</organism>
<name>KAD_LACAC</name>
<evidence type="ECO:0000255" key="1">
    <source>
        <dbReference type="HAMAP-Rule" id="MF_00235"/>
    </source>
</evidence>
<sequence length="218" mass="24530">MINLILLGLPGAGKGTASERIVDKYHLTHISTGDMFREAMANKTKVGLEAKSYIDKGNLVPDEVTARLVEERLSQPDIKEGYILDGFPRTTVQAELLEGITKRLKKPLTNVIALEVDEDTLIKRLSARYMCKNCGATYNKISKQPKVEGTCDRCGSHEFYQREDDKPEVVKNRLEVNEKMNAPLKDFYQKKGLLTIINGEQTPEKVFEDIDAVLSNNQ</sequence>
<comment type="function">
    <text evidence="1">Catalyzes the reversible transfer of the terminal phosphate group between ATP and AMP. Plays an important role in cellular energy homeostasis and in adenine nucleotide metabolism.</text>
</comment>
<comment type="catalytic activity">
    <reaction evidence="1">
        <text>AMP + ATP = 2 ADP</text>
        <dbReference type="Rhea" id="RHEA:12973"/>
        <dbReference type="ChEBI" id="CHEBI:30616"/>
        <dbReference type="ChEBI" id="CHEBI:456215"/>
        <dbReference type="ChEBI" id="CHEBI:456216"/>
        <dbReference type="EC" id="2.7.4.3"/>
    </reaction>
</comment>
<comment type="pathway">
    <text evidence="1">Purine metabolism; AMP biosynthesis via salvage pathway; AMP from ADP: step 1/1.</text>
</comment>
<comment type="subunit">
    <text evidence="1">Monomer.</text>
</comment>
<comment type="subcellular location">
    <subcellularLocation>
        <location evidence="1">Cytoplasm</location>
    </subcellularLocation>
</comment>
<comment type="domain">
    <text evidence="1">Consists of three domains, a large central CORE domain and two small peripheral domains, NMPbind and LID, which undergo movements during catalysis. The LID domain closes over the site of phosphoryl transfer upon ATP binding. Assembling and dissambling the active center during each catalytic cycle provides an effective means to prevent ATP hydrolysis. Some bacteria have evolved a zinc-coordinating structure that stabilizes the LID domain.</text>
</comment>
<comment type="similarity">
    <text evidence="1">Belongs to the adenylate kinase family.</text>
</comment>
<accession>Q5FM70</accession>
<protein>
    <recommendedName>
        <fullName evidence="1">Adenylate kinase</fullName>
        <shortName evidence="1">AK</shortName>
        <ecNumber evidence="1">2.7.4.3</ecNumber>
    </recommendedName>
    <alternativeName>
        <fullName evidence="1">ATP-AMP transphosphorylase</fullName>
    </alternativeName>
    <alternativeName>
        <fullName evidence="1">ATP:AMP phosphotransferase</fullName>
    </alternativeName>
    <alternativeName>
        <fullName evidence="1">Adenylate monophosphate kinase</fullName>
    </alternativeName>
</protein>
<proteinExistence type="inferred from homology"/>
<reference key="1">
    <citation type="journal article" date="2005" name="Proc. Natl. Acad. Sci. U.S.A.">
        <title>Complete genome sequence of the probiotic lactic acid bacterium Lactobacillus acidophilus NCFM.</title>
        <authorList>
            <person name="Altermann E."/>
            <person name="Russell W.M."/>
            <person name="Azcarate-Peril M.A."/>
            <person name="Barrangou R."/>
            <person name="Buck B.L."/>
            <person name="McAuliffe O."/>
            <person name="Souther N."/>
            <person name="Dobson A."/>
            <person name="Duong T."/>
            <person name="Callanan M."/>
            <person name="Lick S."/>
            <person name="Hamrick A."/>
            <person name="Cano R."/>
            <person name="Klaenhammer T.R."/>
        </authorList>
    </citation>
    <scope>NUCLEOTIDE SEQUENCE [LARGE SCALE GENOMIC DNA]</scope>
    <source>
        <strain>ATCC 700396 / NCK56 / N2 / NCFM</strain>
    </source>
</reference>
<gene>
    <name evidence="1" type="primary">adk</name>
    <name type="ordered locus">LBA0312</name>
</gene>
<feature type="chain" id="PRO_1000021731" description="Adenylate kinase">
    <location>
        <begin position="1"/>
        <end position="218"/>
    </location>
</feature>
<feature type="region of interest" description="NMP" evidence="1">
    <location>
        <begin position="31"/>
        <end position="60"/>
    </location>
</feature>
<feature type="region of interest" description="LID" evidence="1">
    <location>
        <begin position="127"/>
        <end position="165"/>
    </location>
</feature>
<feature type="binding site" evidence="1">
    <location>
        <begin position="11"/>
        <end position="16"/>
    </location>
    <ligand>
        <name>ATP</name>
        <dbReference type="ChEBI" id="CHEBI:30616"/>
    </ligand>
</feature>
<feature type="binding site" evidence="1">
    <location>
        <position position="32"/>
    </location>
    <ligand>
        <name>AMP</name>
        <dbReference type="ChEBI" id="CHEBI:456215"/>
    </ligand>
</feature>
<feature type="binding site" evidence="1">
    <location>
        <position position="37"/>
    </location>
    <ligand>
        <name>AMP</name>
        <dbReference type="ChEBI" id="CHEBI:456215"/>
    </ligand>
</feature>
<feature type="binding site" evidence="1">
    <location>
        <begin position="58"/>
        <end position="60"/>
    </location>
    <ligand>
        <name>AMP</name>
        <dbReference type="ChEBI" id="CHEBI:456215"/>
    </ligand>
</feature>
<feature type="binding site" evidence="1">
    <location>
        <begin position="86"/>
        <end position="89"/>
    </location>
    <ligand>
        <name>AMP</name>
        <dbReference type="ChEBI" id="CHEBI:456215"/>
    </ligand>
</feature>
<feature type="binding site" evidence="1">
    <location>
        <position position="93"/>
    </location>
    <ligand>
        <name>AMP</name>
        <dbReference type="ChEBI" id="CHEBI:456215"/>
    </ligand>
</feature>
<feature type="binding site" evidence="1">
    <location>
        <position position="128"/>
    </location>
    <ligand>
        <name>ATP</name>
        <dbReference type="ChEBI" id="CHEBI:30616"/>
    </ligand>
</feature>
<feature type="binding site" evidence="1">
    <location>
        <position position="131"/>
    </location>
    <ligand>
        <name>Zn(2+)</name>
        <dbReference type="ChEBI" id="CHEBI:29105"/>
        <note>structural</note>
    </ligand>
</feature>
<feature type="binding site" evidence="1">
    <location>
        <position position="134"/>
    </location>
    <ligand>
        <name>Zn(2+)</name>
        <dbReference type="ChEBI" id="CHEBI:29105"/>
        <note>structural</note>
    </ligand>
</feature>
<feature type="binding site" evidence="1">
    <location>
        <begin position="137"/>
        <end position="138"/>
    </location>
    <ligand>
        <name>ATP</name>
        <dbReference type="ChEBI" id="CHEBI:30616"/>
    </ligand>
</feature>
<feature type="binding site" evidence="1">
    <location>
        <position position="151"/>
    </location>
    <ligand>
        <name>Zn(2+)</name>
        <dbReference type="ChEBI" id="CHEBI:29105"/>
        <note>structural</note>
    </ligand>
</feature>
<feature type="binding site" evidence="1">
    <location>
        <position position="154"/>
    </location>
    <ligand>
        <name>Zn(2+)</name>
        <dbReference type="ChEBI" id="CHEBI:29105"/>
        <note>structural</note>
    </ligand>
</feature>
<feature type="binding site" evidence="1">
    <location>
        <position position="162"/>
    </location>
    <ligand>
        <name>AMP</name>
        <dbReference type="ChEBI" id="CHEBI:456215"/>
    </ligand>
</feature>
<feature type="binding site" evidence="1">
    <location>
        <position position="173"/>
    </location>
    <ligand>
        <name>AMP</name>
        <dbReference type="ChEBI" id="CHEBI:456215"/>
    </ligand>
</feature>
<feature type="binding site" evidence="1">
    <location>
        <position position="201"/>
    </location>
    <ligand>
        <name>ATP</name>
        <dbReference type="ChEBI" id="CHEBI:30616"/>
    </ligand>
</feature>
<dbReference type="EC" id="2.7.4.3" evidence="1"/>
<dbReference type="EMBL" id="CP000033">
    <property type="protein sequence ID" value="AAV42204.1"/>
    <property type="molecule type" value="Genomic_DNA"/>
</dbReference>
<dbReference type="RefSeq" id="WP_003549045.1">
    <property type="nucleotide sequence ID" value="NC_006814.3"/>
</dbReference>
<dbReference type="RefSeq" id="YP_193235.1">
    <property type="nucleotide sequence ID" value="NC_006814.3"/>
</dbReference>
<dbReference type="SMR" id="Q5FM70"/>
<dbReference type="STRING" id="272621.LBA0312"/>
<dbReference type="KEGG" id="lac:LBA0312"/>
<dbReference type="PATRIC" id="fig|272621.13.peg.298"/>
<dbReference type="eggNOG" id="COG0563">
    <property type="taxonomic scope" value="Bacteria"/>
</dbReference>
<dbReference type="HOGENOM" id="CLU_032354_1_2_9"/>
<dbReference type="OrthoDB" id="9805030at2"/>
<dbReference type="BioCyc" id="LACI272621:G1G49-306-MONOMER"/>
<dbReference type="UniPathway" id="UPA00588">
    <property type="reaction ID" value="UER00649"/>
</dbReference>
<dbReference type="Proteomes" id="UP000006381">
    <property type="component" value="Chromosome"/>
</dbReference>
<dbReference type="GO" id="GO:0005737">
    <property type="term" value="C:cytoplasm"/>
    <property type="evidence" value="ECO:0007669"/>
    <property type="project" value="UniProtKB-SubCell"/>
</dbReference>
<dbReference type="GO" id="GO:0004017">
    <property type="term" value="F:adenylate kinase activity"/>
    <property type="evidence" value="ECO:0007669"/>
    <property type="project" value="UniProtKB-UniRule"/>
</dbReference>
<dbReference type="GO" id="GO:0005524">
    <property type="term" value="F:ATP binding"/>
    <property type="evidence" value="ECO:0007669"/>
    <property type="project" value="UniProtKB-UniRule"/>
</dbReference>
<dbReference type="GO" id="GO:0008270">
    <property type="term" value="F:zinc ion binding"/>
    <property type="evidence" value="ECO:0007669"/>
    <property type="project" value="UniProtKB-UniRule"/>
</dbReference>
<dbReference type="GO" id="GO:0044209">
    <property type="term" value="P:AMP salvage"/>
    <property type="evidence" value="ECO:0007669"/>
    <property type="project" value="UniProtKB-UniRule"/>
</dbReference>
<dbReference type="CDD" id="cd01428">
    <property type="entry name" value="ADK"/>
    <property type="match status" value="1"/>
</dbReference>
<dbReference type="FunFam" id="3.40.50.300:FF:000106">
    <property type="entry name" value="Adenylate kinase mitochondrial"/>
    <property type="match status" value="1"/>
</dbReference>
<dbReference type="Gene3D" id="3.40.50.300">
    <property type="entry name" value="P-loop containing nucleotide triphosphate hydrolases"/>
    <property type="match status" value="1"/>
</dbReference>
<dbReference type="HAMAP" id="MF_00235">
    <property type="entry name" value="Adenylate_kinase_Adk"/>
    <property type="match status" value="1"/>
</dbReference>
<dbReference type="InterPro" id="IPR006259">
    <property type="entry name" value="Adenyl_kin_sub"/>
</dbReference>
<dbReference type="InterPro" id="IPR000850">
    <property type="entry name" value="Adenylat/UMP-CMP_kin"/>
</dbReference>
<dbReference type="InterPro" id="IPR033690">
    <property type="entry name" value="Adenylat_kinase_CS"/>
</dbReference>
<dbReference type="InterPro" id="IPR007862">
    <property type="entry name" value="Adenylate_kinase_lid-dom"/>
</dbReference>
<dbReference type="InterPro" id="IPR027417">
    <property type="entry name" value="P-loop_NTPase"/>
</dbReference>
<dbReference type="NCBIfam" id="TIGR01351">
    <property type="entry name" value="adk"/>
    <property type="match status" value="1"/>
</dbReference>
<dbReference type="NCBIfam" id="NF001380">
    <property type="entry name" value="PRK00279.1-2"/>
    <property type="match status" value="1"/>
</dbReference>
<dbReference type="NCBIfam" id="NF001381">
    <property type="entry name" value="PRK00279.1-3"/>
    <property type="match status" value="1"/>
</dbReference>
<dbReference type="PANTHER" id="PTHR23359">
    <property type="entry name" value="NUCLEOTIDE KINASE"/>
    <property type="match status" value="1"/>
</dbReference>
<dbReference type="Pfam" id="PF00406">
    <property type="entry name" value="ADK"/>
    <property type="match status" value="1"/>
</dbReference>
<dbReference type="Pfam" id="PF05191">
    <property type="entry name" value="ADK_lid"/>
    <property type="match status" value="1"/>
</dbReference>
<dbReference type="PRINTS" id="PR00094">
    <property type="entry name" value="ADENYLTKNASE"/>
</dbReference>
<dbReference type="SUPFAM" id="SSF52540">
    <property type="entry name" value="P-loop containing nucleoside triphosphate hydrolases"/>
    <property type="match status" value="1"/>
</dbReference>
<dbReference type="PROSITE" id="PS00113">
    <property type="entry name" value="ADENYLATE_KINASE"/>
    <property type="match status" value="1"/>
</dbReference>